<accession>Q3B2G7</accession>
<protein>
    <recommendedName>
        <fullName evidence="1">Phosphatidylserine decarboxylase proenzyme</fullName>
        <ecNumber evidence="1">4.1.1.65</ecNumber>
    </recommendedName>
    <component>
        <recommendedName>
            <fullName evidence="1">Phosphatidylserine decarboxylase alpha chain</fullName>
        </recommendedName>
    </component>
    <component>
        <recommendedName>
            <fullName evidence="1">Phosphatidylserine decarboxylase beta chain</fullName>
        </recommendedName>
    </component>
</protein>
<evidence type="ECO:0000255" key="1">
    <source>
        <dbReference type="HAMAP-Rule" id="MF_00664"/>
    </source>
</evidence>
<proteinExistence type="inferred from homology"/>
<reference key="1">
    <citation type="submission" date="2005-08" db="EMBL/GenBank/DDBJ databases">
        <title>Complete sequence of Pelodictyon luteolum DSM 273.</title>
        <authorList>
            <consortium name="US DOE Joint Genome Institute"/>
            <person name="Copeland A."/>
            <person name="Lucas S."/>
            <person name="Lapidus A."/>
            <person name="Barry K."/>
            <person name="Detter J.C."/>
            <person name="Glavina T."/>
            <person name="Hammon N."/>
            <person name="Israni S."/>
            <person name="Pitluck S."/>
            <person name="Bryant D."/>
            <person name="Schmutz J."/>
            <person name="Larimer F."/>
            <person name="Land M."/>
            <person name="Kyrpides N."/>
            <person name="Ivanova N."/>
            <person name="Richardson P."/>
        </authorList>
    </citation>
    <scope>NUCLEOTIDE SEQUENCE [LARGE SCALE GENOMIC DNA]</scope>
    <source>
        <strain>DSM 273 / BCRC 81028 / 2530</strain>
    </source>
</reference>
<feature type="chain" id="PRO_0000262243" description="Phosphatidylserine decarboxylase beta chain" evidence="1">
    <location>
        <begin position="1"/>
        <end position="181"/>
    </location>
</feature>
<feature type="chain" id="PRO_0000262244" description="Phosphatidylserine decarboxylase alpha chain" evidence="1">
    <location>
        <begin position="182"/>
        <end position="212"/>
    </location>
</feature>
<feature type="active site" description="Schiff-base intermediate with substrate; via pyruvic acid" evidence="1">
    <location>
        <position position="182"/>
    </location>
</feature>
<feature type="site" description="Cleavage (non-hydrolytic); by autocatalysis" evidence="1">
    <location>
        <begin position="181"/>
        <end position="182"/>
    </location>
</feature>
<feature type="modified residue" description="Pyruvic acid (Ser); by autocatalysis" evidence="1">
    <location>
        <position position="182"/>
    </location>
</feature>
<keyword id="KW-1003">Cell membrane</keyword>
<keyword id="KW-0210">Decarboxylase</keyword>
<keyword id="KW-0444">Lipid biosynthesis</keyword>
<keyword id="KW-0443">Lipid metabolism</keyword>
<keyword id="KW-0456">Lyase</keyword>
<keyword id="KW-0472">Membrane</keyword>
<keyword id="KW-0594">Phospholipid biosynthesis</keyword>
<keyword id="KW-1208">Phospholipid metabolism</keyword>
<keyword id="KW-0670">Pyruvate</keyword>
<keyword id="KW-1185">Reference proteome</keyword>
<keyword id="KW-0865">Zymogen</keyword>
<gene>
    <name evidence="1" type="primary">psd</name>
    <name type="ordered locus">Plut_1610</name>
</gene>
<dbReference type="EC" id="4.1.1.65" evidence="1"/>
<dbReference type="EMBL" id="CP000096">
    <property type="protein sequence ID" value="ABB24464.1"/>
    <property type="molecule type" value="Genomic_DNA"/>
</dbReference>
<dbReference type="RefSeq" id="WP_011358336.1">
    <property type="nucleotide sequence ID" value="NC_007512.1"/>
</dbReference>
<dbReference type="STRING" id="319225.Plut_1610"/>
<dbReference type="KEGG" id="plt:Plut_1610"/>
<dbReference type="eggNOG" id="COG0688">
    <property type="taxonomic scope" value="Bacteria"/>
</dbReference>
<dbReference type="HOGENOM" id="CLU_072492_2_0_10"/>
<dbReference type="OrthoDB" id="9790893at2"/>
<dbReference type="UniPathway" id="UPA00558">
    <property type="reaction ID" value="UER00616"/>
</dbReference>
<dbReference type="Proteomes" id="UP000002709">
    <property type="component" value="Chromosome"/>
</dbReference>
<dbReference type="GO" id="GO:0005886">
    <property type="term" value="C:plasma membrane"/>
    <property type="evidence" value="ECO:0007669"/>
    <property type="project" value="UniProtKB-SubCell"/>
</dbReference>
<dbReference type="GO" id="GO:0004609">
    <property type="term" value="F:phosphatidylserine decarboxylase activity"/>
    <property type="evidence" value="ECO:0007669"/>
    <property type="project" value="UniProtKB-UniRule"/>
</dbReference>
<dbReference type="GO" id="GO:0006646">
    <property type="term" value="P:phosphatidylethanolamine biosynthetic process"/>
    <property type="evidence" value="ECO:0007669"/>
    <property type="project" value="UniProtKB-UniRule"/>
</dbReference>
<dbReference type="HAMAP" id="MF_00664">
    <property type="entry name" value="PS_decarb_PSD_A"/>
    <property type="match status" value="1"/>
</dbReference>
<dbReference type="InterPro" id="IPR003817">
    <property type="entry name" value="PS_Dcarbxylase"/>
</dbReference>
<dbReference type="InterPro" id="IPR033175">
    <property type="entry name" value="PSD-A"/>
</dbReference>
<dbReference type="NCBIfam" id="NF003682">
    <property type="entry name" value="PRK05305.2-2"/>
    <property type="match status" value="1"/>
</dbReference>
<dbReference type="NCBIfam" id="NF003685">
    <property type="entry name" value="PRK05305.2-5"/>
    <property type="match status" value="1"/>
</dbReference>
<dbReference type="PANTHER" id="PTHR35809">
    <property type="entry name" value="ARCHAETIDYLSERINE DECARBOXYLASE PROENZYME-RELATED"/>
    <property type="match status" value="1"/>
</dbReference>
<dbReference type="PANTHER" id="PTHR35809:SF1">
    <property type="entry name" value="ARCHAETIDYLSERINE DECARBOXYLASE PROENZYME-RELATED"/>
    <property type="match status" value="1"/>
</dbReference>
<dbReference type="Pfam" id="PF02666">
    <property type="entry name" value="PS_Dcarbxylase"/>
    <property type="match status" value="1"/>
</dbReference>
<organism>
    <name type="scientific">Chlorobium luteolum (strain DSM 273 / BCRC 81028 / 2530)</name>
    <name type="common">Pelodictyon luteolum</name>
    <dbReference type="NCBI Taxonomy" id="319225"/>
    <lineage>
        <taxon>Bacteria</taxon>
        <taxon>Pseudomonadati</taxon>
        <taxon>Chlorobiota</taxon>
        <taxon>Chlorobiia</taxon>
        <taxon>Chlorobiales</taxon>
        <taxon>Chlorobiaceae</taxon>
        <taxon>Chlorobium/Pelodictyon group</taxon>
        <taxon>Pelodictyon</taxon>
    </lineage>
</organism>
<comment type="function">
    <text evidence="1">Catalyzes the formation of phosphatidylethanolamine (PtdEtn) from phosphatidylserine (PtdSer).</text>
</comment>
<comment type="catalytic activity">
    <reaction evidence="1">
        <text>a 1,2-diacyl-sn-glycero-3-phospho-L-serine + H(+) = a 1,2-diacyl-sn-glycero-3-phosphoethanolamine + CO2</text>
        <dbReference type="Rhea" id="RHEA:20828"/>
        <dbReference type="ChEBI" id="CHEBI:15378"/>
        <dbReference type="ChEBI" id="CHEBI:16526"/>
        <dbReference type="ChEBI" id="CHEBI:57262"/>
        <dbReference type="ChEBI" id="CHEBI:64612"/>
        <dbReference type="EC" id="4.1.1.65"/>
    </reaction>
</comment>
<comment type="cofactor">
    <cofactor evidence="1">
        <name>pyruvate</name>
        <dbReference type="ChEBI" id="CHEBI:15361"/>
    </cofactor>
    <text evidence="1">Binds 1 pyruvoyl group covalently per subunit.</text>
</comment>
<comment type="pathway">
    <text evidence="1">Phospholipid metabolism; phosphatidylethanolamine biosynthesis; phosphatidylethanolamine from CDP-diacylglycerol: step 2/2.</text>
</comment>
<comment type="subunit">
    <text evidence="1">Heterodimer of a large membrane-associated beta subunit and a small pyruvoyl-containing alpha subunit.</text>
</comment>
<comment type="subcellular location">
    <subcellularLocation>
        <location evidence="1">Cell membrane</location>
        <topology evidence="1">Peripheral membrane protein</topology>
    </subcellularLocation>
</comment>
<comment type="PTM">
    <text evidence="1">Is synthesized initially as an inactive proenzyme. Formation of the active enzyme involves a self-maturation process in which the active site pyruvoyl group is generated from an internal serine residue via an autocatalytic post-translational modification. Two non-identical subunits are generated from the proenzyme in this reaction, and the pyruvate is formed at the N-terminus of the alpha chain, which is derived from the carboxyl end of the proenzyme. The post-translation cleavage follows an unusual pathway, termed non-hydrolytic serinolysis, in which the side chain hydroxyl group of the serine supplies its oxygen atom to form the C-terminus of the beta chain, while the remainder of the serine residue undergoes an oxidative deamination to produce ammonia and the pyruvoyl prosthetic group on the alpha chain.</text>
</comment>
<comment type="similarity">
    <text evidence="1">Belongs to the phosphatidylserine decarboxylase family. PSD-A subfamily.</text>
</comment>
<sequence>MLTPYGRSTILKTTIFASAIAVTGLFFPPVSRAVLILSAAAILGFAFWFFRDPERTPAETGRVILAPADGRVILVEERDHPFTGSRSTLISIFMSPLNVHVNRIPQSGRIRHLQYHPGSFKMAFDHKSMEENERMDIGIESDSLKIFFSQVSGFIARRIVCPLRMDEAVEAGKRFGMIKFGSRVDIIIPQGSTPAVTIGGKTRAGETVIARW</sequence>
<name>PSD_CHLL3</name>